<reference key="1">
    <citation type="journal article" date="1989" name="Mol. Microbiol.">
        <title>Extensive sequence homology between IgA receptor and M proteins in Streptococcus pyogenes.</title>
        <authorList>
            <person name="Frithz E."/>
            <person name="Heden L.-O."/>
            <person name="Lindahl G."/>
        </authorList>
    </citation>
    <scope>NUCLEOTIDE SEQUENCE [GENOMIC DNA]</scope>
    <source>
        <strain>AW43 / Serotype M60</strain>
    </source>
</reference>
<sequence>MARKDTNKQYSLRKLKTGTASVAVAVAVLGAGFANQTEVKAAEIKKPQADSAWNWPKEYNALLKENEELKVEREKYLSYADDKEKDPQYRALMGENQDLRKREGQYQDKIEELEKERKEKQERQEQLERQYQIEADKHYQEQQKKHQQEQQQLEAEKQKLAKDKQISDASRQGLSRDLEASRAAKKELEAEHQKLKEEKQISDASRQGLSRDLEASREAKKKVEADLAALTAEHQKLKEDKQISDASRQGLSRDLEASREAKKKVEADLAEANSKLQALEKLNKELEEGKKLSEKEKAELQARLEAEAKALKEQLAKQAEELAKLKGNQTPNAKVAPQANRSRSAMTQQKRTLPSTGETANPFFTAAAATVMVSAGMLALKRKEEN</sequence>
<accession>P13050</accession>
<feature type="signal peptide">
    <location>
        <begin position="1"/>
        <end position="41"/>
    </location>
</feature>
<feature type="chain" id="PRO_0000005591" description="IgA receptor">
    <location>
        <begin position="42"/>
        <end position="356"/>
    </location>
</feature>
<feature type="propeptide" id="PRO_0000005592" description="Removed by sortase" evidence="2">
    <location>
        <begin position="357"/>
        <end position="386"/>
    </location>
</feature>
<feature type="repeat" description="C 1" evidence="3">
    <location>
        <begin position="158"/>
        <end position="192"/>
    </location>
</feature>
<feature type="repeat" description="C 2" evidence="3">
    <location>
        <begin position="193"/>
        <end position="227"/>
    </location>
</feature>
<feature type="repeat" description="C 3" evidence="3">
    <location>
        <begin position="235"/>
        <end position="269"/>
    </location>
</feature>
<feature type="repeat" description="D 1" evidence="4">
    <location>
        <begin position="302"/>
        <end position="307"/>
    </location>
</feature>
<feature type="repeat" description="D 2" evidence="4">
    <location>
        <begin position="308"/>
        <end position="313"/>
    </location>
</feature>
<feature type="repeat" description="D 3" evidence="4">
    <location>
        <begin position="316"/>
        <end position="321"/>
    </location>
</feature>
<feature type="repeat" description="D 4" evidence="4">
    <location>
        <begin position="323"/>
        <end position="328"/>
    </location>
</feature>
<feature type="region of interest" description="IgA-binding" evidence="1">
    <location>
        <begin position="42"/>
        <end position="152"/>
    </location>
</feature>
<feature type="region of interest" description="Disordered" evidence="5">
    <location>
        <begin position="79"/>
        <end position="221"/>
    </location>
</feature>
<feature type="region of interest" description="Disordered" evidence="5">
    <location>
        <begin position="233"/>
        <end position="268"/>
    </location>
</feature>
<feature type="region of interest" description="Disordered" evidence="5">
    <location>
        <begin position="323"/>
        <end position="360"/>
    </location>
</feature>
<feature type="short sequence motif" description="LPXTG sorting signal" evidence="2">
    <location>
        <begin position="353"/>
        <end position="357"/>
    </location>
</feature>
<feature type="compositionally biased region" description="Basic and acidic residues" evidence="5">
    <location>
        <begin position="79"/>
        <end position="88"/>
    </location>
</feature>
<feature type="compositionally biased region" description="Basic and acidic residues" evidence="5">
    <location>
        <begin position="97"/>
        <end position="128"/>
    </location>
</feature>
<feature type="compositionally biased region" description="Basic and acidic residues" evidence="5">
    <location>
        <begin position="134"/>
        <end position="166"/>
    </location>
</feature>
<feature type="compositionally biased region" description="Basic and acidic residues" evidence="5">
    <location>
        <begin position="174"/>
        <end position="201"/>
    </location>
</feature>
<feature type="compositionally biased region" description="Basic and acidic residues" evidence="5">
    <location>
        <begin position="209"/>
        <end position="221"/>
    </location>
</feature>
<feature type="compositionally biased region" description="Basic and acidic residues" evidence="5">
    <location>
        <begin position="233"/>
        <end position="243"/>
    </location>
</feature>
<feature type="compositionally biased region" description="Basic and acidic residues" evidence="5">
    <location>
        <begin position="251"/>
        <end position="267"/>
    </location>
</feature>
<feature type="compositionally biased region" description="Polar residues" evidence="5">
    <location>
        <begin position="339"/>
        <end position="359"/>
    </location>
</feature>
<feature type="modified residue" description="Pentaglycyl murein peptidoglycan amidated threonine" evidence="2">
    <location>
        <position position="356"/>
    </location>
</feature>
<feature type="helix" evidence="7">
    <location>
        <begin position="87"/>
        <end position="113"/>
    </location>
</feature>
<name>ARP4_STRPY</name>
<comment type="function">
    <text>Binds IgA of both subclasses, and also binds polyclonal IgG weakly.</text>
</comment>
<comment type="interaction">
    <interactant intactId="EBI-978341">
        <id>P13050</id>
    </interactant>
    <interactant intactId="EBI-978348">
        <id>P04003</id>
        <label>C4BPA</label>
    </interactant>
    <organismsDiffer>true</organismsDiffer>
    <experiments>5</experiments>
</comment>
<comment type="subcellular location">
    <subcellularLocation>
        <location evidence="2">Secreted</location>
        <location evidence="2">Cell wall</location>
        <topology evidence="2">Peptidoglycan-anchor</topology>
    </subcellularLocation>
</comment>
<comment type="similarity">
    <text evidence="6">Belongs to the M protein family.</text>
</comment>
<gene>
    <name type="primary">arp4</name>
</gene>
<keyword id="KW-0002">3D-structure</keyword>
<keyword id="KW-0134">Cell wall</keyword>
<keyword id="KW-0572">Peptidoglycan-anchor</keyword>
<keyword id="KW-0675">Receptor</keyword>
<keyword id="KW-0677">Repeat</keyword>
<keyword id="KW-0964">Secreted</keyword>
<keyword id="KW-0732">Signal</keyword>
<dbReference type="EMBL" id="X15198">
    <property type="protein sequence ID" value="CAA33269.1"/>
    <property type="molecule type" value="Genomic_DNA"/>
</dbReference>
<dbReference type="PIR" id="S05568">
    <property type="entry name" value="S05568"/>
</dbReference>
<dbReference type="RefSeq" id="WP_219208701.1">
    <property type="nucleotide sequence ID" value="NZ_CP049693.1"/>
</dbReference>
<dbReference type="PDB" id="8SKV">
    <property type="method" value="EM"/>
    <property type="resolution" value="3.10 A"/>
    <property type="chains" value="a/b=42-356"/>
</dbReference>
<dbReference type="PDBsum" id="8SKV"/>
<dbReference type="EMDB" id="EMD-40568"/>
<dbReference type="SMR" id="P13050"/>
<dbReference type="IntAct" id="P13050">
    <property type="interactions" value="1"/>
</dbReference>
<dbReference type="STRING" id="1314.SD89_08960"/>
<dbReference type="GO" id="GO:0005576">
    <property type="term" value="C:extracellular region"/>
    <property type="evidence" value="ECO:0007669"/>
    <property type="project" value="UniProtKB-KW"/>
</dbReference>
<dbReference type="Gene3D" id="6.10.250.460">
    <property type="match status" value="3"/>
</dbReference>
<dbReference type="InterPro" id="IPR019931">
    <property type="entry name" value="LPXTG_anchor"/>
</dbReference>
<dbReference type="InterPro" id="IPR019950">
    <property type="entry name" value="M_anchor"/>
</dbReference>
<dbReference type="InterPro" id="IPR003345">
    <property type="entry name" value="M_repeat"/>
</dbReference>
<dbReference type="InterPro" id="IPR049896">
    <property type="entry name" value="SMCR"/>
</dbReference>
<dbReference type="InterPro" id="IPR049895">
    <property type="entry name" value="SMDRR"/>
</dbReference>
<dbReference type="InterPro" id="IPR005877">
    <property type="entry name" value="YSIRK_signal_dom"/>
</dbReference>
<dbReference type="NCBIfam" id="TIGR01167">
    <property type="entry name" value="LPXTG_anchor"/>
    <property type="match status" value="1"/>
</dbReference>
<dbReference type="NCBIfam" id="TIGR01168">
    <property type="entry name" value="YSIRK_signal"/>
    <property type="match status" value="1"/>
</dbReference>
<dbReference type="Pfam" id="PF00746">
    <property type="entry name" value="Gram_pos_anchor"/>
    <property type="match status" value="1"/>
</dbReference>
<dbReference type="Pfam" id="PF02370">
    <property type="entry name" value="M"/>
    <property type="match status" value="3"/>
</dbReference>
<dbReference type="Pfam" id="PF04650">
    <property type="entry name" value="YSIRK_signal"/>
    <property type="match status" value="1"/>
</dbReference>
<dbReference type="PRINTS" id="PR00015">
    <property type="entry name" value="GPOSANCHOR"/>
</dbReference>
<dbReference type="PROSITE" id="PS50847">
    <property type="entry name" value="GRAM_POS_ANCHORING"/>
    <property type="match status" value="1"/>
</dbReference>
<dbReference type="PROSITE" id="PS52028">
    <property type="entry name" value="SMCR"/>
    <property type="match status" value="3"/>
</dbReference>
<dbReference type="PROSITE" id="PS52030">
    <property type="entry name" value="SMDRR"/>
    <property type="match status" value="1"/>
</dbReference>
<evidence type="ECO:0000255" key="1"/>
<evidence type="ECO:0000255" key="2">
    <source>
        <dbReference type="PROSITE-ProRule" id="PRU00477"/>
    </source>
</evidence>
<evidence type="ECO:0000255" key="3">
    <source>
        <dbReference type="PROSITE-ProRule" id="PRU01372"/>
    </source>
</evidence>
<evidence type="ECO:0000255" key="4">
    <source>
        <dbReference type="PROSITE-ProRule" id="PRU01374"/>
    </source>
</evidence>
<evidence type="ECO:0000256" key="5">
    <source>
        <dbReference type="SAM" id="MobiDB-lite"/>
    </source>
</evidence>
<evidence type="ECO:0000305" key="6"/>
<evidence type="ECO:0007829" key="7">
    <source>
        <dbReference type="PDB" id="8SKV"/>
    </source>
</evidence>
<proteinExistence type="evidence at protein level"/>
<organism>
    <name type="scientific">Streptococcus pyogenes</name>
    <dbReference type="NCBI Taxonomy" id="1314"/>
    <lineage>
        <taxon>Bacteria</taxon>
        <taxon>Bacillati</taxon>
        <taxon>Bacillota</taxon>
        <taxon>Bacilli</taxon>
        <taxon>Lactobacillales</taxon>
        <taxon>Streptococcaceae</taxon>
        <taxon>Streptococcus</taxon>
    </lineage>
</organism>
<protein>
    <recommendedName>
        <fullName>IgA receptor</fullName>
    </recommendedName>
</protein>